<proteinExistence type="evidence at transcript level"/>
<protein>
    <recommendedName>
        <fullName evidence="6">Indole-3-pyruvate monooxygenase YUCCA8</fullName>
        <shortName evidence="6">OsYUCCA8</shortName>
        <ecNumber evidence="1">1.14.13.168</ecNumber>
    </recommendedName>
    <alternativeName>
        <fullName evidence="6">Flavin-containing monooxygenase YUCCA8</fullName>
    </alternativeName>
    <alternativeName>
        <fullName evidence="5">OsFMOt</fullName>
    </alternativeName>
    <alternativeName>
        <fullName evidence="6">Protein CONSTITUTIVELY WILTED 1</fullName>
        <shortName evidence="6">OsCOW1</shortName>
    </alternativeName>
    <alternativeName>
        <fullName evidence="6">Protein NARROW LEAF 7</fullName>
    </alternativeName>
    <alternativeName>
        <fullName evidence="6">Protein RICE ETHYLENE-INSENSITIVE 7</fullName>
    </alternativeName>
</protein>
<gene>
    <name evidence="6" type="primary">YUCCA8</name>
    <name evidence="6" type="synonym">COW1</name>
    <name evidence="6" type="synonym">NAL7</name>
    <name evidence="6" type="synonym">REIN7</name>
    <name evidence="6" type="synonym">YUCA8</name>
    <name evidence="7" type="ORF">OsI_10125</name>
</gene>
<accession>B8ANW0</accession>
<reference key="1">
    <citation type="journal article" date="2013" name="J. Genet.">
        <title>Cloning, characterization and expression of OsFMO(t) in rice encoding a flavin monooxygenase.</title>
        <authorList>
            <person name="Yi J."/>
            <person name="Liu L."/>
            <person name="Cao Y."/>
            <person name="Li J."/>
            <person name="Mei M."/>
        </authorList>
    </citation>
    <scope>NUCLEOTIDE SEQUENCE [GENOMIC DNA / MRNA]</scope>
    <scope>FUNCTION</scope>
    <scope>TISSUE SPECIFICITY</scope>
    <source>
        <strain>cv. Qinghuazhan</strain>
    </source>
</reference>
<reference key="2">
    <citation type="journal article" date="2005" name="PLoS Biol.">
        <title>The genomes of Oryza sativa: a history of duplications.</title>
        <authorList>
            <person name="Yu J."/>
            <person name="Wang J."/>
            <person name="Lin W."/>
            <person name="Li S."/>
            <person name="Li H."/>
            <person name="Zhou J."/>
            <person name="Ni P."/>
            <person name="Dong W."/>
            <person name="Hu S."/>
            <person name="Zeng C."/>
            <person name="Zhang J."/>
            <person name="Zhang Y."/>
            <person name="Li R."/>
            <person name="Xu Z."/>
            <person name="Li S."/>
            <person name="Li X."/>
            <person name="Zheng H."/>
            <person name="Cong L."/>
            <person name="Lin L."/>
            <person name="Yin J."/>
            <person name="Geng J."/>
            <person name="Li G."/>
            <person name="Shi J."/>
            <person name="Liu J."/>
            <person name="Lv H."/>
            <person name="Li J."/>
            <person name="Wang J."/>
            <person name="Deng Y."/>
            <person name="Ran L."/>
            <person name="Shi X."/>
            <person name="Wang X."/>
            <person name="Wu Q."/>
            <person name="Li C."/>
            <person name="Ren X."/>
            <person name="Wang J."/>
            <person name="Wang X."/>
            <person name="Li D."/>
            <person name="Liu D."/>
            <person name="Zhang X."/>
            <person name="Ji Z."/>
            <person name="Zhao W."/>
            <person name="Sun Y."/>
            <person name="Zhang Z."/>
            <person name="Bao J."/>
            <person name="Han Y."/>
            <person name="Dong L."/>
            <person name="Ji J."/>
            <person name="Chen P."/>
            <person name="Wu S."/>
            <person name="Liu J."/>
            <person name="Xiao Y."/>
            <person name="Bu D."/>
            <person name="Tan J."/>
            <person name="Yang L."/>
            <person name="Ye C."/>
            <person name="Zhang J."/>
            <person name="Xu J."/>
            <person name="Zhou Y."/>
            <person name="Yu Y."/>
            <person name="Zhang B."/>
            <person name="Zhuang S."/>
            <person name="Wei H."/>
            <person name="Liu B."/>
            <person name="Lei M."/>
            <person name="Yu H."/>
            <person name="Li Y."/>
            <person name="Xu H."/>
            <person name="Wei S."/>
            <person name="He X."/>
            <person name="Fang L."/>
            <person name="Zhang Z."/>
            <person name="Zhang Y."/>
            <person name="Huang X."/>
            <person name="Su Z."/>
            <person name="Tong W."/>
            <person name="Li J."/>
            <person name="Tong Z."/>
            <person name="Li S."/>
            <person name="Ye J."/>
            <person name="Wang L."/>
            <person name="Fang L."/>
            <person name="Lei T."/>
            <person name="Chen C.-S."/>
            <person name="Chen H.-C."/>
            <person name="Xu Z."/>
            <person name="Li H."/>
            <person name="Huang H."/>
            <person name="Zhang F."/>
            <person name="Xu H."/>
            <person name="Li N."/>
            <person name="Zhao C."/>
            <person name="Li S."/>
            <person name="Dong L."/>
            <person name="Huang Y."/>
            <person name="Li L."/>
            <person name="Xi Y."/>
            <person name="Qi Q."/>
            <person name="Li W."/>
            <person name="Zhang B."/>
            <person name="Hu W."/>
            <person name="Zhang Y."/>
            <person name="Tian X."/>
            <person name="Jiao Y."/>
            <person name="Liang X."/>
            <person name="Jin J."/>
            <person name="Gao L."/>
            <person name="Zheng W."/>
            <person name="Hao B."/>
            <person name="Liu S.-M."/>
            <person name="Wang W."/>
            <person name="Yuan L."/>
            <person name="Cao M."/>
            <person name="McDermott J."/>
            <person name="Samudrala R."/>
            <person name="Wang J."/>
            <person name="Wong G.K.-S."/>
            <person name="Yang H."/>
        </authorList>
    </citation>
    <scope>NUCLEOTIDE SEQUENCE [LARGE SCALE GENOMIC DNA]</scope>
    <source>
        <strain>cv. 93-11</strain>
    </source>
</reference>
<reference key="3">
    <citation type="journal article" date="2007" name="J. Integr. Plant Biol.">
        <title>Genetic analysis and molecular mapping of a rolling leaf mutation gene in rice.</title>
        <authorList>
            <person name="Yi J."/>
            <person name="Zhuang C."/>
            <person name="Wang X."/>
            <person name="Cao Y."/>
            <person name="Liu Y."/>
            <person name="Li J."/>
            <person name="Mei M."/>
        </authorList>
    </citation>
    <scope>FUNCTION</scope>
    <scope>DISRUPTION PHENOTYPE</scope>
    <source>
        <strain>cv. Qinghuazhan</strain>
    </source>
</reference>
<comment type="function">
    <text evidence="1 3 4">Involved in auxin biosynthesis (PubMed:24371168). Converts the indole-3-pyruvic acid (IPA) produced by the TAA family to indole-3-acetic acid (IAA) (By similarity). Seems not able to use tryptamine (TAM) as substrate (By similarity). Probably responsible for auxin biosynthesis in leaves and involved in the regulation of lateral leaf growth (Ref.3). Required for maintaining water homeostasis and an appropriate root to shoot ratio (By similarity). Required for the inhibition of root growth by ethylene in etiolated seedlings (By similarity). Functions downstream of the ethylene-response transcription factor EIL1 (By similarity).</text>
</comment>
<comment type="catalytic activity">
    <reaction evidence="1">
        <text>indole-3-pyruvate + NADPH + O2 + H(+) = (indol-3-yl)acetate + CO2 + NADP(+) + H2O</text>
        <dbReference type="Rhea" id="RHEA:34331"/>
        <dbReference type="ChEBI" id="CHEBI:15377"/>
        <dbReference type="ChEBI" id="CHEBI:15378"/>
        <dbReference type="ChEBI" id="CHEBI:15379"/>
        <dbReference type="ChEBI" id="CHEBI:16526"/>
        <dbReference type="ChEBI" id="CHEBI:17640"/>
        <dbReference type="ChEBI" id="CHEBI:30854"/>
        <dbReference type="ChEBI" id="CHEBI:57783"/>
        <dbReference type="ChEBI" id="CHEBI:58349"/>
        <dbReference type="EC" id="1.14.13.168"/>
    </reaction>
</comment>
<comment type="cofactor">
    <cofactor evidence="1">
        <name>FAD</name>
        <dbReference type="ChEBI" id="CHEBI:57692"/>
    </cofactor>
</comment>
<comment type="subcellular location">
    <subcellularLocation>
        <location evidence="1">Endoplasmic reticulum</location>
    </subcellularLocation>
</comment>
<comment type="tissue specificity">
    <text evidence="3">Expressed in organs undergoing active growth and cell division.</text>
</comment>
<comment type="disruption phenotype">
    <text evidence="4">Narrow and rolled leaf phenotype.</text>
</comment>
<comment type="miscellaneous">
    <text evidence="3">Calli overexpressing YUCCA8 contain increased levels of auxin and exhibit overgrowing roots and abnormal root morphology.</text>
</comment>
<comment type="similarity">
    <text evidence="6">Belongs to the FMO family.</text>
</comment>
<feature type="chain" id="PRO_0000445281" description="Indole-3-pyruvate monooxygenase YUCCA8">
    <location>
        <begin position="1"/>
        <end position="421"/>
    </location>
</feature>
<feature type="binding site" evidence="2">
    <location>
        <begin position="30"/>
        <end position="35"/>
    </location>
    <ligand>
        <name>FAD</name>
        <dbReference type="ChEBI" id="CHEBI:57692"/>
    </ligand>
</feature>
<feature type="binding site" evidence="2">
    <location>
        <begin position="201"/>
        <end position="206"/>
    </location>
    <ligand>
        <name>NADP(+)</name>
        <dbReference type="ChEBI" id="CHEBI:58349"/>
    </ligand>
</feature>
<keyword id="KW-0256">Endoplasmic reticulum</keyword>
<keyword id="KW-0274">FAD</keyword>
<keyword id="KW-0285">Flavoprotein</keyword>
<keyword id="KW-0503">Monooxygenase</keyword>
<keyword id="KW-0521">NADP</keyword>
<keyword id="KW-0560">Oxidoreductase</keyword>
<keyword id="KW-1185">Reference proteome</keyword>
<evidence type="ECO:0000250" key="1">
    <source>
        <dbReference type="UniProtKB" id="Q10RE2"/>
    </source>
</evidence>
<evidence type="ECO:0000255" key="2"/>
<evidence type="ECO:0000269" key="3">
    <source>
    </source>
</evidence>
<evidence type="ECO:0000269" key="4">
    <source ref="3"/>
</evidence>
<evidence type="ECO:0000303" key="5">
    <source>
    </source>
</evidence>
<evidence type="ECO:0000305" key="6"/>
<evidence type="ECO:0000312" key="7">
    <source>
        <dbReference type="EMBL" id="EEC74567.1"/>
    </source>
</evidence>
<sequence>MQGQQKQNAGGGGGDNASPCIVLDGPIIVGAGPSGLAVAATLRQHGAPFTVVERSGGVADLWTNRTYDRLRLHLPKVFCELPHVAFPPDFPTYPTKHDFLRYLHSYAARFAIAPLLRRTVTRAWYDHPASLWRVTTTTTSSSATSVITEYASPWLVVASGENAEVVVPKVKGRERFAGEALHSSEYRSGERFRGMRVLVVGCGNSGMEMCLDLCEHGAMPFMSVRSGVHVLPREMFGASTFGIAMKLLRWLPIKMVDRFLLLVARMVLGDTEKYGLKRPKLGPLEIKNITGKSPVLDVGAWSLIKSGNIKIVPEVESFSGNGARFVDGNEMAFDAVIFATGYRSNVPSWLQEDGELFTEEGKLRSSGSSSEWRWRGPNGLYCVGFSGRGLLGAGADALRAAADIAGRWQETQQAAANISSV</sequence>
<name>YUC8_ORYSI</name>
<dbReference type="EC" id="1.14.13.168" evidence="1"/>
<dbReference type="EMBL" id="HQ443270">
    <property type="protein sequence ID" value="AED99265.1"/>
    <property type="molecule type" value="Genomic_DNA"/>
</dbReference>
<dbReference type="EMBL" id="HQ443271">
    <property type="protein sequence ID" value="AED99266.1"/>
    <property type="molecule type" value="mRNA"/>
</dbReference>
<dbReference type="EMBL" id="CM000128">
    <property type="protein sequence ID" value="EEC74567.1"/>
    <property type="molecule type" value="Genomic_DNA"/>
</dbReference>
<dbReference type="SMR" id="B8ANW0"/>
<dbReference type="STRING" id="39946.B8ANW0"/>
<dbReference type="EnsemblPlants" id="BGIOSGA011917-TA">
    <property type="protein sequence ID" value="BGIOSGA011917-PA"/>
    <property type="gene ID" value="BGIOSGA011917"/>
</dbReference>
<dbReference type="EnsemblPlants" id="OsLima_03g0004630.01">
    <property type="protein sequence ID" value="OsLima_03g0004630.01"/>
    <property type="gene ID" value="OsLima_03g0004630"/>
</dbReference>
<dbReference type="EnsemblPlants" id="OsMH63_03G004590_01">
    <property type="protein sequence ID" value="OsMH63_03G004590_01"/>
    <property type="gene ID" value="OsMH63_03G004590"/>
</dbReference>
<dbReference type="EnsemblPlants" id="OsPr106_03g0004630.01">
    <property type="protein sequence ID" value="OsPr106_03g0004630.01"/>
    <property type="gene ID" value="OsPr106_03g0004630"/>
</dbReference>
<dbReference type="Gramene" id="BGIOSGA011917-TA">
    <property type="protein sequence ID" value="BGIOSGA011917-PA"/>
    <property type="gene ID" value="BGIOSGA011917"/>
</dbReference>
<dbReference type="Gramene" id="OsLima_03g0004630.01">
    <property type="protein sequence ID" value="OsLima_03g0004630.01"/>
    <property type="gene ID" value="OsLima_03g0004630"/>
</dbReference>
<dbReference type="Gramene" id="OsMH63_03G004590_01">
    <property type="protein sequence ID" value="OsMH63_03G004590_01"/>
    <property type="gene ID" value="OsMH63_03G004590"/>
</dbReference>
<dbReference type="Gramene" id="OsPr106_03g0004630.01">
    <property type="protein sequence ID" value="OsPr106_03g0004630.01"/>
    <property type="gene ID" value="OsPr106_03g0004630"/>
</dbReference>
<dbReference type="HOGENOM" id="CLU_006909_2_0_1"/>
<dbReference type="OMA" id="HVGFPAD"/>
<dbReference type="Proteomes" id="UP000007015">
    <property type="component" value="Chromosome 3"/>
</dbReference>
<dbReference type="GO" id="GO:0005783">
    <property type="term" value="C:endoplasmic reticulum"/>
    <property type="evidence" value="ECO:0007669"/>
    <property type="project" value="UniProtKB-SubCell"/>
</dbReference>
<dbReference type="GO" id="GO:0050660">
    <property type="term" value="F:flavin adenine dinucleotide binding"/>
    <property type="evidence" value="ECO:0007669"/>
    <property type="project" value="InterPro"/>
</dbReference>
<dbReference type="GO" id="GO:0103075">
    <property type="term" value="F:indole-3-pyruvate monooxygenase activity"/>
    <property type="evidence" value="ECO:0007669"/>
    <property type="project" value="UniProtKB-EC"/>
</dbReference>
<dbReference type="GO" id="GO:0004499">
    <property type="term" value="F:N,N-dimethylaniline monooxygenase activity"/>
    <property type="evidence" value="ECO:0007669"/>
    <property type="project" value="InterPro"/>
</dbReference>
<dbReference type="GO" id="GO:0050661">
    <property type="term" value="F:NADP binding"/>
    <property type="evidence" value="ECO:0007669"/>
    <property type="project" value="InterPro"/>
</dbReference>
<dbReference type="GO" id="GO:0009851">
    <property type="term" value="P:auxin biosynthetic process"/>
    <property type="evidence" value="ECO:0007669"/>
    <property type="project" value="EnsemblPlants"/>
</dbReference>
<dbReference type="GO" id="GO:2000024">
    <property type="term" value="P:regulation of leaf development"/>
    <property type="evidence" value="ECO:0007669"/>
    <property type="project" value="EnsemblPlants"/>
</dbReference>
<dbReference type="GO" id="GO:2000280">
    <property type="term" value="P:regulation of root development"/>
    <property type="evidence" value="ECO:0007669"/>
    <property type="project" value="EnsemblPlants"/>
</dbReference>
<dbReference type="FunFam" id="3.50.50.60:FF:000100">
    <property type="entry name" value="Flavin-containing monooxygenase"/>
    <property type="match status" value="1"/>
</dbReference>
<dbReference type="Gene3D" id="3.50.50.60">
    <property type="entry name" value="FAD/NAD(P)-binding domain"/>
    <property type="match status" value="1"/>
</dbReference>
<dbReference type="InterPro" id="IPR050982">
    <property type="entry name" value="Auxin_biosynth/cation_transpt"/>
</dbReference>
<dbReference type="InterPro" id="IPR036188">
    <property type="entry name" value="FAD/NAD-bd_sf"/>
</dbReference>
<dbReference type="InterPro" id="IPR020946">
    <property type="entry name" value="Flavin_mOase-like"/>
</dbReference>
<dbReference type="PANTHER" id="PTHR43539">
    <property type="entry name" value="FLAVIN-BINDING MONOOXYGENASE-LIKE PROTEIN (AFU_ORTHOLOGUE AFUA_4G09220)"/>
    <property type="match status" value="1"/>
</dbReference>
<dbReference type="PANTHER" id="PTHR43539:SF51">
    <property type="entry name" value="INDOLE-3-PYRUVATE MONOOXYGENASE YUCCA8"/>
    <property type="match status" value="1"/>
</dbReference>
<dbReference type="Pfam" id="PF00743">
    <property type="entry name" value="FMO-like"/>
    <property type="match status" value="1"/>
</dbReference>
<dbReference type="PRINTS" id="PR00368">
    <property type="entry name" value="FADPNR"/>
</dbReference>
<dbReference type="PRINTS" id="PR00469">
    <property type="entry name" value="PNDRDTASEII"/>
</dbReference>
<dbReference type="SUPFAM" id="SSF51905">
    <property type="entry name" value="FAD/NAD(P)-binding domain"/>
    <property type="match status" value="2"/>
</dbReference>
<organism>
    <name type="scientific">Oryza sativa subsp. indica</name>
    <name type="common">Rice</name>
    <dbReference type="NCBI Taxonomy" id="39946"/>
    <lineage>
        <taxon>Eukaryota</taxon>
        <taxon>Viridiplantae</taxon>
        <taxon>Streptophyta</taxon>
        <taxon>Embryophyta</taxon>
        <taxon>Tracheophyta</taxon>
        <taxon>Spermatophyta</taxon>
        <taxon>Magnoliopsida</taxon>
        <taxon>Liliopsida</taxon>
        <taxon>Poales</taxon>
        <taxon>Poaceae</taxon>
        <taxon>BOP clade</taxon>
        <taxon>Oryzoideae</taxon>
        <taxon>Oryzeae</taxon>
        <taxon>Oryzinae</taxon>
        <taxon>Oryza</taxon>
        <taxon>Oryza sativa</taxon>
    </lineage>
</organism>